<evidence type="ECO:0000255" key="1">
    <source>
        <dbReference type="HAMAP-Rule" id="MF_03154"/>
    </source>
</evidence>
<evidence type="ECO:0000269" key="2">
    <source>
    </source>
</evidence>
<sequence length="199" mass="23642">MENEFQDGKTEVIEAWYMDDSEEDQRLPHHREPKEFIHVDKLTELGVISWRLNPDNWENCENLKRIREARGYSYVDICDVCPEKLPNYETKIKSFFEEHLHTDEEIRYCLEGSGYFDVRDQNDQWIRIALKKGGMIVLPAGMYHRFTLDTDNYIKAMRLFVGDPVWTPYNRPHDHLPARKEFLAKLLKSEGENQAVEGF</sequence>
<keyword id="KW-0028">Amino-acid biosynthesis</keyword>
<keyword id="KW-0963">Cytoplasm</keyword>
<keyword id="KW-0223">Dioxygenase</keyword>
<keyword id="KW-0408">Iron</keyword>
<keyword id="KW-0479">Metal-binding</keyword>
<keyword id="KW-0486">Methionine biosynthesis</keyword>
<keyword id="KW-0533">Nickel</keyword>
<keyword id="KW-0539">Nucleus</keyword>
<keyword id="KW-0560">Oxidoreductase</keyword>
<keyword id="KW-1185">Reference proteome</keyword>
<organism>
    <name type="scientific">Oryza sativa subsp. indica</name>
    <name type="common">Rice</name>
    <dbReference type="NCBI Taxonomy" id="39946"/>
    <lineage>
        <taxon>Eukaryota</taxon>
        <taxon>Viridiplantae</taxon>
        <taxon>Streptophyta</taxon>
        <taxon>Embryophyta</taxon>
        <taxon>Tracheophyta</taxon>
        <taxon>Spermatophyta</taxon>
        <taxon>Magnoliopsida</taxon>
        <taxon>Liliopsida</taxon>
        <taxon>Poales</taxon>
        <taxon>Poaceae</taxon>
        <taxon>BOP clade</taxon>
        <taxon>Oryzoideae</taxon>
        <taxon>Oryzeae</taxon>
        <taxon>Oryzinae</taxon>
        <taxon>Oryza</taxon>
        <taxon>Oryza sativa</taxon>
    </lineage>
</organism>
<gene>
    <name type="primary">ARD1</name>
    <name type="synonym">SIP2</name>
    <name type="ORF">OsI_032467</name>
</gene>
<name>MTND1_ORYSI</name>
<protein>
    <recommendedName>
        <fullName evidence="1">Acireductone dioxygenase 1</fullName>
    </recommendedName>
    <alternativeName>
        <fullName evidence="1">Acireductone dioxygenase (Fe(2+)-requiring) 1</fullName>
        <shortName evidence="1">ARD' 1</shortName>
        <shortName evidence="1">Fe-ARD 1</shortName>
        <ecNumber evidence="1">1.13.11.54</ecNumber>
    </alternativeName>
    <alternativeName>
        <fullName evidence="1">Acireductone dioxygenase (Ni(2+)-requiring) 1</fullName>
        <shortName evidence="1">ARD 1</shortName>
        <shortName evidence="1">Ni-ARD 1</shortName>
        <ecNumber evidence="1">1.13.11.53</ecNumber>
    </alternativeName>
    <alternativeName>
        <fullName>Submergence-induced protein 2</fullName>
    </alternativeName>
</protein>
<dbReference type="EC" id="1.13.11.54" evidence="1"/>
<dbReference type="EC" id="1.13.11.53" evidence="1"/>
<dbReference type="EMBL" id="AF050200">
    <property type="protein sequence ID" value="AAC05511.1"/>
    <property type="molecule type" value="mRNA"/>
</dbReference>
<dbReference type="EMBL" id="CM000135">
    <property type="status" value="NOT_ANNOTATED_CDS"/>
    <property type="molecule type" value="Genomic_DNA"/>
</dbReference>
<dbReference type="PIR" id="T02787">
    <property type="entry name" value="T02787"/>
</dbReference>
<dbReference type="SMR" id="A2Z7C4"/>
<dbReference type="STRING" id="39946.A2Z7C4"/>
<dbReference type="BRENDA" id="1.13.11.53">
    <property type="organism ID" value="4460"/>
</dbReference>
<dbReference type="SABIO-RK" id="A2Z7C4"/>
<dbReference type="UniPathway" id="UPA00904">
    <property type="reaction ID" value="UER00878"/>
</dbReference>
<dbReference type="Proteomes" id="UP000007015">
    <property type="component" value="Chromosome 10"/>
</dbReference>
<dbReference type="GO" id="GO:0005737">
    <property type="term" value="C:cytoplasm"/>
    <property type="evidence" value="ECO:0007669"/>
    <property type="project" value="UniProtKB-SubCell"/>
</dbReference>
<dbReference type="GO" id="GO:0005634">
    <property type="term" value="C:nucleus"/>
    <property type="evidence" value="ECO:0007669"/>
    <property type="project" value="UniProtKB-SubCell"/>
</dbReference>
<dbReference type="GO" id="GO:0010308">
    <property type="term" value="F:acireductone dioxygenase (Ni2+-requiring) activity"/>
    <property type="evidence" value="ECO:0007669"/>
    <property type="project" value="UniProtKB-UniRule"/>
</dbReference>
<dbReference type="GO" id="GO:0010309">
    <property type="term" value="F:acireductone dioxygenase [iron(II)-requiring] activity"/>
    <property type="evidence" value="ECO:0007669"/>
    <property type="project" value="UniProtKB-UniRule"/>
</dbReference>
<dbReference type="GO" id="GO:0005506">
    <property type="term" value="F:iron ion binding"/>
    <property type="evidence" value="ECO:0007669"/>
    <property type="project" value="UniProtKB-UniRule"/>
</dbReference>
<dbReference type="GO" id="GO:0016151">
    <property type="term" value="F:nickel cation binding"/>
    <property type="evidence" value="ECO:0007669"/>
    <property type="project" value="UniProtKB-UniRule"/>
</dbReference>
<dbReference type="GO" id="GO:0019509">
    <property type="term" value="P:L-methionine salvage from methylthioadenosine"/>
    <property type="evidence" value="ECO:0007669"/>
    <property type="project" value="UniProtKB-UniRule"/>
</dbReference>
<dbReference type="CDD" id="cd02232">
    <property type="entry name" value="cupin_ARD"/>
    <property type="match status" value="1"/>
</dbReference>
<dbReference type="FunFam" id="2.60.120.10:FF:000031">
    <property type="entry name" value="1,2-dihydroxy-3-keto-5-methylthiopentene dioxygenase"/>
    <property type="match status" value="1"/>
</dbReference>
<dbReference type="Gene3D" id="2.60.120.10">
    <property type="entry name" value="Jelly Rolls"/>
    <property type="match status" value="1"/>
</dbReference>
<dbReference type="HAMAP" id="MF_03154">
    <property type="entry name" value="Salvage_MtnD_euk"/>
    <property type="match status" value="1"/>
</dbReference>
<dbReference type="InterPro" id="IPR004313">
    <property type="entry name" value="ARD"/>
</dbReference>
<dbReference type="InterPro" id="IPR027496">
    <property type="entry name" value="ARD_euk"/>
</dbReference>
<dbReference type="InterPro" id="IPR014710">
    <property type="entry name" value="RmlC-like_jellyroll"/>
</dbReference>
<dbReference type="InterPro" id="IPR011051">
    <property type="entry name" value="RmlC_Cupin_sf"/>
</dbReference>
<dbReference type="PANTHER" id="PTHR23418">
    <property type="entry name" value="ACIREDUCTONE DIOXYGENASE"/>
    <property type="match status" value="1"/>
</dbReference>
<dbReference type="PANTHER" id="PTHR23418:SF0">
    <property type="entry name" value="ACIREDUCTONE DIOXYGENASE"/>
    <property type="match status" value="1"/>
</dbReference>
<dbReference type="Pfam" id="PF03079">
    <property type="entry name" value="ARD"/>
    <property type="match status" value="1"/>
</dbReference>
<dbReference type="SUPFAM" id="SSF51182">
    <property type="entry name" value="RmlC-like cupins"/>
    <property type="match status" value="1"/>
</dbReference>
<feature type="chain" id="PRO_0000291428" description="Acireductone dioxygenase 1">
    <location>
        <begin position="1"/>
        <end position="199"/>
    </location>
</feature>
<feature type="binding site" evidence="1">
    <location>
        <position position="99"/>
    </location>
    <ligand>
        <name>Fe(2+)</name>
        <dbReference type="ChEBI" id="CHEBI:29033"/>
        <note>for iron-dependent acireductone dioxygenase activity</note>
    </ligand>
</feature>
<feature type="binding site" evidence="1">
    <location>
        <position position="99"/>
    </location>
    <ligand>
        <name>Ni(2+)</name>
        <dbReference type="ChEBI" id="CHEBI:49786"/>
        <note>for nickel-dependent acireductone dioxygenase activity</note>
    </ligand>
</feature>
<feature type="binding site" evidence="1">
    <location>
        <position position="101"/>
    </location>
    <ligand>
        <name>Fe(2+)</name>
        <dbReference type="ChEBI" id="CHEBI:29033"/>
        <note>for iron-dependent acireductone dioxygenase activity</note>
    </ligand>
</feature>
<feature type="binding site" evidence="1">
    <location>
        <position position="101"/>
    </location>
    <ligand>
        <name>Ni(2+)</name>
        <dbReference type="ChEBI" id="CHEBI:49786"/>
        <note>for nickel-dependent acireductone dioxygenase activity</note>
    </ligand>
</feature>
<feature type="binding site" evidence="1">
    <location>
        <position position="105"/>
    </location>
    <ligand>
        <name>Fe(2+)</name>
        <dbReference type="ChEBI" id="CHEBI:29033"/>
        <note>for iron-dependent acireductone dioxygenase activity</note>
    </ligand>
</feature>
<feature type="binding site" evidence="1">
    <location>
        <position position="105"/>
    </location>
    <ligand>
        <name>Ni(2+)</name>
        <dbReference type="ChEBI" id="CHEBI:49786"/>
        <note>for nickel-dependent acireductone dioxygenase activity</note>
    </ligand>
</feature>
<feature type="binding site" evidence="1">
    <location>
        <position position="144"/>
    </location>
    <ligand>
        <name>Fe(2+)</name>
        <dbReference type="ChEBI" id="CHEBI:29033"/>
        <note>for iron-dependent acireductone dioxygenase activity</note>
    </ligand>
</feature>
<feature type="binding site" evidence="1">
    <location>
        <position position="144"/>
    </location>
    <ligand>
        <name>Ni(2+)</name>
        <dbReference type="ChEBI" id="CHEBI:49786"/>
        <note>for nickel-dependent acireductone dioxygenase activity</note>
    </ligand>
</feature>
<comment type="function">
    <text evidence="1 2">Catalyzes 2 different reactions between oxygen and the acireductone 1,2-dihydroxy-3-keto-5-methylthiopentene (DHK-MTPene) depending upon the metal bound in the active site (By similarity). Fe-containing acireductone dioxygenase (Fe-ARD) produces formate and 2-keto-4-methylthiobutyrate (KMTB), the alpha-ketoacid precursor of methionine in the methionine recycle pathway (PubMed:16297065). Ni-containing acireductone dioxygenase (Ni-ARD) produces methylthiopropionate, carbon monoxide and formate, and does not lie on the methionine recycle pathway (By similarity).</text>
</comment>
<comment type="catalytic activity">
    <reaction evidence="2">
        <text>1,2-dihydroxy-5-(methylsulfanyl)pent-1-en-3-one + O2 = 4-methylsulfanyl-2-oxobutanoate + formate + 2 H(+)</text>
        <dbReference type="Rhea" id="RHEA:24504"/>
        <dbReference type="ChEBI" id="CHEBI:15378"/>
        <dbReference type="ChEBI" id="CHEBI:15379"/>
        <dbReference type="ChEBI" id="CHEBI:15740"/>
        <dbReference type="ChEBI" id="CHEBI:16723"/>
        <dbReference type="ChEBI" id="CHEBI:49252"/>
        <dbReference type="EC" id="1.13.11.54"/>
    </reaction>
</comment>
<comment type="catalytic activity">
    <reaction evidence="1">
        <text>1,2-dihydroxy-5-(methylsulfanyl)pent-1-en-3-one + O2 = 3-(methylsulfanyl)propanoate + CO + formate + 2 H(+)</text>
        <dbReference type="Rhea" id="RHEA:14161"/>
        <dbReference type="ChEBI" id="CHEBI:15378"/>
        <dbReference type="ChEBI" id="CHEBI:15379"/>
        <dbReference type="ChEBI" id="CHEBI:15740"/>
        <dbReference type="ChEBI" id="CHEBI:17245"/>
        <dbReference type="ChEBI" id="CHEBI:49016"/>
        <dbReference type="ChEBI" id="CHEBI:49252"/>
        <dbReference type="EC" id="1.13.11.53"/>
    </reaction>
</comment>
<comment type="cofactor">
    <cofactor evidence="2">
        <name>Fe(2+)</name>
        <dbReference type="ChEBI" id="CHEBI:29033"/>
    </cofactor>
    <cofactor evidence="1">
        <name>Ni(2+)</name>
        <dbReference type="ChEBI" id="CHEBI:49786"/>
    </cofactor>
    <text evidence="1">Binds either 1 Fe or Ni cation per monomer. Iron-binding promotes an acireductone dioxygenase reaction producing 2-keto-4-methylthiobutyrate, while nickel-binding promotes an acireductone dioxygenase reaction producing 3-(methylsulfanyl)propanoate.</text>
</comment>
<comment type="biophysicochemical properties">
    <kinetics>
        <KM evidence="2">25.9 uM for 1,2-dihydroxy-3-ketopent-1-ene (DHKP) (using iron as cofactor)</KM>
        <KM evidence="2">1.1 mM for O(2) (using iron as cofactor)</KM>
    </kinetics>
</comment>
<comment type="pathway">
    <text evidence="1">Amino-acid biosynthesis; L-methionine biosynthesis via salvage pathway; L-methionine from S-methyl-5-thio-alpha-D-ribose 1-phosphate: step 5/6.</text>
</comment>
<comment type="subcellular location">
    <subcellularLocation>
        <location evidence="1">Cytoplasm</location>
    </subcellularLocation>
    <subcellularLocation>
        <location evidence="1">Nucleus</location>
    </subcellularLocation>
</comment>
<comment type="induction">
    <text evidence="2">By low levels of ethylene and submergence.</text>
</comment>
<comment type="similarity">
    <text evidence="1">Belongs to the acireductone dioxygenase (ARD) family.</text>
</comment>
<reference key="1">
    <citation type="journal article" date="2005" name="Plant J.">
        <title>The immediate-early ethylene response gene OsARD1 encodes an acireductone dioxygenase involved in recycling of the ethylene precursor S-adenosylmethionine.</title>
        <authorList>
            <person name="Sauter M."/>
            <person name="Lorbiecke R."/>
            <person name="Ouyang B."/>
            <person name="Pochapsky T.C."/>
            <person name="Rzewuski G."/>
        </authorList>
    </citation>
    <scope>NUCLEOTIDE SEQUENCE [MRNA]</scope>
    <scope>FUNCTION</scope>
    <scope>CATALYTIC ACTIVITY</scope>
    <scope>BIOPHYSICOCHEMICAL PROPERTIES</scope>
    <scope>COFACTOR</scope>
    <scope>INDUCTION</scope>
    <source>
        <strain>cv. Pin Gaew 56</strain>
    </source>
</reference>
<reference key="2">
    <citation type="journal article" date="2005" name="PLoS Biol.">
        <title>The genomes of Oryza sativa: a history of duplications.</title>
        <authorList>
            <person name="Yu J."/>
            <person name="Wang J."/>
            <person name="Lin W."/>
            <person name="Li S."/>
            <person name="Li H."/>
            <person name="Zhou J."/>
            <person name="Ni P."/>
            <person name="Dong W."/>
            <person name="Hu S."/>
            <person name="Zeng C."/>
            <person name="Zhang J."/>
            <person name="Zhang Y."/>
            <person name="Li R."/>
            <person name="Xu Z."/>
            <person name="Li S."/>
            <person name="Li X."/>
            <person name="Zheng H."/>
            <person name="Cong L."/>
            <person name="Lin L."/>
            <person name="Yin J."/>
            <person name="Geng J."/>
            <person name="Li G."/>
            <person name="Shi J."/>
            <person name="Liu J."/>
            <person name="Lv H."/>
            <person name="Li J."/>
            <person name="Wang J."/>
            <person name="Deng Y."/>
            <person name="Ran L."/>
            <person name="Shi X."/>
            <person name="Wang X."/>
            <person name="Wu Q."/>
            <person name="Li C."/>
            <person name="Ren X."/>
            <person name="Wang J."/>
            <person name="Wang X."/>
            <person name="Li D."/>
            <person name="Liu D."/>
            <person name="Zhang X."/>
            <person name="Ji Z."/>
            <person name="Zhao W."/>
            <person name="Sun Y."/>
            <person name="Zhang Z."/>
            <person name="Bao J."/>
            <person name="Han Y."/>
            <person name="Dong L."/>
            <person name="Ji J."/>
            <person name="Chen P."/>
            <person name="Wu S."/>
            <person name="Liu J."/>
            <person name="Xiao Y."/>
            <person name="Bu D."/>
            <person name="Tan J."/>
            <person name="Yang L."/>
            <person name="Ye C."/>
            <person name="Zhang J."/>
            <person name="Xu J."/>
            <person name="Zhou Y."/>
            <person name="Yu Y."/>
            <person name="Zhang B."/>
            <person name="Zhuang S."/>
            <person name="Wei H."/>
            <person name="Liu B."/>
            <person name="Lei M."/>
            <person name="Yu H."/>
            <person name="Li Y."/>
            <person name="Xu H."/>
            <person name="Wei S."/>
            <person name="He X."/>
            <person name="Fang L."/>
            <person name="Zhang Z."/>
            <person name="Zhang Y."/>
            <person name="Huang X."/>
            <person name="Su Z."/>
            <person name="Tong W."/>
            <person name="Li J."/>
            <person name="Tong Z."/>
            <person name="Li S."/>
            <person name="Ye J."/>
            <person name="Wang L."/>
            <person name="Fang L."/>
            <person name="Lei T."/>
            <person name="Chen C.-S."/>
            <person name="Chen H.-C."/>
            <person name="Xu Z."/>
            <person name="Li H."/>
            <person name="Huang H."/>
            <person name="Zhang F."/>
            <person name="Xu H."/>
            <person name="Li N."/>
            <person name="Zhao C."/>
            <person name="Li S."/>
            <person name="Dong L."/>
            <person name="Huang Y."/>
            <person name="Li L."/>
            <person name="Xi Y."/>
            <person name="Qi Q."/>
            <person name="Li W."/>
            <person name="Zhang B."/>
            <person name="Hu W."/>
            <person name="Zhang Y."/>
            <person name="Tian X."/>
            <person name="Jiao Y."/>
            <person name="Liang X."/>
            <person name="Jin J."/>
            <person name="Gao L."/>
            <person name="Zheng W."/>
            <person name="Hao B."/>
            <person name="Liu S.-M."/>
            <person name="Wang W."/>
            <person name="Yuan L."/>
            <person name="Cao M."/>
            <person name="McDermott J."/>
            <person name="Samudrala R."/>
            <person name="Wang J."/>
            <person name="Wong G.K.-S."/>
            <person name="Yang H."/>
        </authorList>
    </citation>
    <scope>NUCLEOTIDE SEQUENCE [LARGE SCALE GENOMIC DNA]</scope>
    <source>
        <strain>cv. 93-11</strain>
    </source>
</reference>
<proteinExistence type="evidence at protein level"/>
<accession>A2Z7C4</accession>
<accession>O65035</accession>
<accession>Q0IXN3</accession>
<accession>Q338A9</accession>